<comment type="function">
    <text evidence="1">NAD-binding protein involved in the addition of a carboxymethylaminomethyl (cmnm) group at the wobble position (U34) of certain tRNAs, forming tRNA-cmnm(5)s(2)U34.</text>
</comment>
<comment type="cofactor">
    <cofactor evidence="1">
        <name>FAD</name>
        <dbReference type="ChEBI" id="CHEBI:57692"/>
    </cofactor>
</comment>
<comment type="subunit">
    <text evidence="1">Homodimer. Heterotetramer of two MnmE and two MnmG subunits.</text>
</comment>
<comment type="subcellular location">
    <subcellularLocation>
        <location evidence="1">Cytoplasm</location>
    </subcellularLocation>
</comment>
<comment type="similarity">
    <text evidence="1">Belongs to the MnmG family.</text>
</comment>
<sequence length="625" mass="69339">MNFQENYDVIVIGGGHAGVEASLAAARMGSKTLLMTINLNMVAFMPCNPSIGGSAKGIVVREIDALGGEMGRNIDKTYIQMKMLNTGKGPAVRALRAQADKDEYAASMKNTVSDQENLTLRQGMVEELILDDEKQKVIGVRTSTGTQYGAKAVIITTGTALRGEIIIGELKYSSGPNNSLSSIGLADNLHEIGFEIGRFKTGTPPRVLASSIDYDKTEIQPGDEAPNHFSFMSSDEDYLKDQIPCWLTYTTENSHTILRDNLHRAPLFSGIVKGVGPRYCPSIEDKITRFADKPRHQLFLEPEGRNTEEVYIGGLSTSMPEDVQFDLVKSIPGLENAKMMRPGYAIEYDVVMPHQLRPTLETKLISGLFTAGQTNGTSGYEEAAGQGLVAGINAALKIQGKPEFILKRSEAYIGVMIDDLVTKGTLEPYRLLTSRAEYRLILRHDNADRRLTEIGRQVGLVSDAQWEHYQAKMAQFDREMKRLNSEKLKPLPDTQEKLGKLGFGPIKDALTGAEFLKRPEVHYDEVIDFIGQAPEVIDRTVIELIETEITYEGYIKKAMDQVDKMHRLEAKRIPKNMDWDKLDSIATEARQKFKKINPETLGQASRISGVNPADISILMVYLEGK</sequence>
<feature type="chain" id="PRO_1000016615" description="tRNA uridine 5-carboxymethylaminomethyl modification enzyme MnmG">
    <location>
        <begin position="1"/>
        <end position="625"/>
    </location>
</feature>
<feature type="binding site" evidence="1">
    <location>
        <begin position="13"/>
        <end position="18"/>
    </location>
    <ligand>
        <name>FAD</name>
        <dbReference type="ChEBI" id="CHEBI:57692"/>
    </ligand>
</feature>
<feature type="binding site" evidence="1">
    <location>
        <position position="125"/>
    </location>
    <ligand>
        <name>FAD</name>
        <dbReference type="ChEBI" id="CHEBI:57692"/>
    </ligand>
</feature>
<feature type="binding site" evidence="1">
    <location>
        <position position="182"/>
    </location>
    <ligand>
        <name>FAD</name>
        <dbReference type="ChEBI" id="CHEBI:57692"/>
    </ligand>
</feature>
<feature type="binding site" evidence="1">
    <location>
        <begin position="276"/>
        <end position="290"/>
    </location>
    <ligand>
        <name>NAD(+)</name>
        <dbReference type="ChEBI" id="CHEBI:57540"/>
    </ligand>
</feature>
<feature type="binding site" evidence="1">
    <location>
        <position position="373"/>
    </location>
    <ligand>
        <name>FAD</name>
        <dbReference type="ChEBI" id="CHEBI:57692"/>
    </ligand>
</feature>
<dbReference type="EMBL" id="CP000425">
    <property type="protein sequence ID" value="ABJ73519.1"/>
    <property type="molecule type" value="Genomic_DNA"/>
</dbReference>
<dbReference type="RefSeq" id="WP_011676859.1">
    <property type="nucleotide sequence ID" value="NC_008527.1"/>
</dbReference>
<dbReference type="SMR" id="Q02X03"/>
<dbReference type="KEGG" id="llc:LACR_2039"/>
<dbReference type="HOGENOM" id="CLU_007831_2_2_9"/>
<dbReference type="Proteomes" id="UP000000240">
    <property type="component" value="Chromosome"/>
</dbReference>
<dbReference type="GO" id="GO:0005829">
    <property type="term" value="C:cytosol"/>
    <property type="evidence" value="ECO:0007669"/>
    <property type="project" value="TreeGrafter"/>
</dbReference>
<dbReference type="GO" id="GO:0050660">
    <property type="term" value="F:flavin adenine dinucleotide binding"/>
    <property type="evidence" value="ECO:0007669"/>
    <property type="project" value="UniProtKB-UniRule"/>
</dbReference>
<dbReference type="GO" id="GO:0030488">
    <property type="term" value="P:tRNA methylation"/>
    <property type="evidence" value="ECO:0007669"/>
    <property type="project" value="TreeGrafter"/>
</dbReference>
<dbReference type="GO" id="GO:0002098">
    <property type="term" value="P:tRNA wobble uridine modification"/>
    <property type="evidence" value="ECO:0007669"/>
    <property type="project" value="InterPro"/>
</dbReference>
<dbReference type="FunFam" id="1.10.10.1800:FF:000001">
    <property type="entry name" value="tRNA uridine 5-carboxymethylaminomethyl modification enzyme MnmG"/>
    <property type="match status" value="1"/>
</dbReference>
<dbReference type="FunFam" id="1.10.150.570:FF:000001">
    <property type="entry name" value="tRNA uridine 5-carboxymethylaminomethyl modification enzyme MnmG"/>
    <property type="match status" value="1"/>
</dbReference>
<dbReference type="FunFam" id="3.50.50.60:FF:000002">
    <property type="entry name" value="tRNA uridine 5-carboxymethylaminomethyl modification enzyme MnmG"/>
    <property type="match status" value="1"/>
</dbReference>
<dbReference type="FunFam" id="3.50.50.60:FF:000063">
    <property type="entry name" value="tRNA uridine 5-carboxymethylaminomethyl modification enzyme MnmG"/>
    <property type="match status" value="1"/>
</dbReference>
<dbReference type="Gene3D" id="3.50.50.60">
    <property type="entry name" value="FAD/NAD(P)-binding domain"/>
    <property type="match status" value="2"/>
</dbReference>
<dbReference type="Gene3D" id="1.10.150.570">
    <property type="entry name" value="GidA associated domain, C-terminal subdomain"/>
    <property type="match status" value="1"/>
</dbReference>
<dbReference type="Gene3D" id="1.10.10.1800">
    <property type="entry name" value="tRNA uridine 5-carboxymethylaminomethyl modification enzyme MnmG/GidA"/>
    <property type="match status" value="1"/>
</dbReference>
<dbReference type="HAMAP" id="MF_00129">
    <property type="entry name" value="MnmG_GidA"/>
    <property type="match status" value="1"/>
</dbReference>
<dbReference type="InterPro" id="IPR036188">
    <property type="entry name" value="FAD/NAD-bd_sf"/>
</dbReference>
<dbReference type="InterPro" id="IPR049312">
    <property type="entry name" value="GIDA_C_N"/>
</dbReference>
<dbReference type="InterPro" id="IPR004416">
    <property type="entry name" value="MnmG"/>
</dbReference>
<dbReference type="InterPro" id="IPR002218">
    <property type="entry name" value="MnmG-rel"/>
</dbReference>
<dbReference type="InterPro" id="IPR020595">
    <property type="entry name" value="MnmG-rel_CS"/>
</dbReference>
<dbReference type="InterPro" id="IPR026904">
    <property type="entry name" value="MnmG_C"/>
</dbReference>
<dbReference type="InterPro" id="IPR047001">
    <property type="entry name" value="MnmG_C_subdom"/>
</dbReference>
<dbReference type="InterPro" id="IPR044920">
    <property type="entry name" value="MnmG_C_subdom_sf"/>
</dbReference>
<dbReference type="InterPro" id="IPR040131">
    <property type="entry name" value="MnmG_N"/>
</dbReference>
<dbReference type="NCBIfam" id="TIGR00136">
    <property type="entry name" value="mnmG_gidA"/>
    <property type="match status" value="1"/>
</dbReference>
<dbReference type="PANTHER" id="PTHR11806">
    <property type="entry name" value="GLUCOSE INHIBITED DIVISION PROTEIN A"/>
    <property type="match status" value="1"/>
</dbReference>
<dbReference type="PANTHER" id="PTHR11806:SF0">
    <property type="entry name" value="PROTEIN MTO1 HOMOLOG, MITOCHONDRIAL"/>
    <property type="match status" value="1"/>
</dbReference>
<dbReference type="Pfam" id="PF01134">
    <property type="entry name" value="GIDA"/>
    <property type="match status" value="1"/>
</dbReference>
<dbReference type="Pfam" id="PF21680">
    <property type="entry name" value="GIDA_C_1st"/>
    <property type="match status" value="1"/>
</dbReference>
<dbReference type="Pfam" id="PF13932">
    <property type="entry name" value="SAM_GIDA_C"/>
    <property type="match status" value="1"/>
</dbReference>
<dbReference type="PRINTS" id="PR00368">
    <property type="entry name" value="FADPNR"/>
</dbReference>
<dbReference type="PRINTS" id="PR00411">
    <property type="entry name" value="PNDRDTASEI"/>
</dbReference>
<dbReference type="SMART" id="SM01228">
    <property type="entry name" value="GIDA_assoc_3"/>
    <property type="match status" value="1"/>
</dbReference>
<dbReference type="SUPFAM" id="SSF51905">
    <property type="entry name" value="FAD/NAD(P)-binding domain"/>
    <property type="match status" value="1"/>
</dbReference>
<dbReference type="PROSITE" id="PS01280">
    <property type="entry name" value="GIDA_1"/>
    <property type="match status" value="1"/>
</dbReference>
<dbReference type="PROSITE" id="PS01281">
    <property type="entry name" value="GIDA_2"/>
    <property type="match status" value="1"/>
</dbReference>
<gene>
    <name evidence="1" type="primary">mnmG</name>
    <name evidence="1" type="synonym">gidA</name>
    <name type="ordered locus">LACR_2039</name>
</gene>
<organism>
    <name type="scientific">Lactococcus lactis subsp. cremoris (strain SK11)</name>
    <dbReference type="NCBI Taxonomy" id="272622"/>
    <lineage>
        <taxon>Bacteria</taxon>
        <taxon>Bacillati</taxon>
        <taxon>Bacillota</taxon>
        <taxon>Bacilli</taxon>
        <taxon>Lactobacillales</taxon>
        <taxon>Streptococcaceae</taxon>
        <taxon>Lactococcus</taxon>
        <taxon>Lactococcus cremoris subsp. cremoris</taxon>
    </lineage>
</organism>
<protein>
    <recommendedName>
        <fullName evidence="1">tRNA uridine 5-carboxymethylaminomethyl modification enzyme MnmG</fullName>
    </recommendedName>
    <alternativeName>
        <fullName evidence="1">Glucose-inhibited division protein A</fullName>
    </alternativeName>
</protein>
<reference key="1">
    <citation type="journal article" date="2006" name="Proc. Natl. Acad. Sci. U.S.A.">
        <title>Comparative genomics of the lactic acid bacteria.</title>
        <authorList>
            <person name="Makarova K.S."/>
            <person name="Slesarev A."/>
            <person name="Wolf Y.I."/>
            <person name="Sorokin A."/>
            <person name="Mirkin B."/>
            <person name="Koonin E.V."/>
            <person name="Pavlov A."/>
            <person name="Pavlova N."/>
            <person name="Karamychev V."/>
            <person name="Polouchine N."/>
            <person name="Shakhova V."/>
            <person name="Grigoriev I."/>
            <person name="Lou Y."/>
            <person name="Rohksar D."/>
            <person name="Lucas S."/>
            <person name="Huang K."/>
            <person name="Goodstein D.M."/>
            <person name="Hawkins T."/>
            <person name="Plengvidhya V."/>
            <person name="Welker D."/>
            <person name="Hughes J."/>
            <person name="Goh Y."/>
            <person name="Benson A."/>
            <person name="Baldwin K."/>
            <person name="Lee J.-H."/>
            <person name="Diaz-Muniz I."/>
            <person name="Dosti B."/>
            <person name="Smeianov V."/>
            <person name="Wechter W."/>
            <person name="Barabote R."/>
            <person name="Lorca G."/>
            <person name="Altermann E."/>
            <person name="Barrangou R."/>
            <person name="Ganesan B."/>
            <person name="Xie Y."/>
            <person name="Rawsthorne H."/>
            <person name="Tamir D."/>
            <person name="Parker C."/>
            <person name="Breidt F."/>
            <person name="Broadbent J.R."/>
            <person name="Hutkins R."/>
            <person name="O'Sullivan D."/>
            <person name="Steele J."/>
            <person name="Unlu G."/>
            <person name="Saier M.H. Jr."/>
            <person name="Klaenhammer T."/>
            <person name="Richardson P."/>
            <person name="Kozyavkin S."/>
            <person name="Weimer B.C."/>
            <person name="Mills D.A."/>
        </authorList>
    </citation>
    <scope>NUCLEOTIDE SEQUENCE [LARGE SCALE GENOMIC DNA]</scope>
    <source>
        <strain>SK11</strain>
    </source>
</reference>
<accession>Q02X03</accession>
<evidence type="ECO:0000255" key="1">
    <source>
        <dbReference type="HAMAP-Rule" id="MF_00129"/>
    </source>
</evidence>
<name>MNMG_LACLS</name>
<proteinExistence type="inferred from homology"/>
<keyword id="KW-0963">Cytoplasm</keyword>
<keyword id="KW-0274">FAD</keyword>
<keyword id="KW-0285">Flavoprotein</keyword>
<keyword id="KW-0520">NAD</keyword>
<keyword id="KW-0819">tRNA processing</keyword>